<reference key="1">
    <citation type="journal article" date="2006" name="Proc. Natl. Acad. Sci. U.S.A.">
        <title>Comparative genomics of the lactic acid bacteria.</title>
        <authorList>
            <person name="Makarova K.S."/>
            <person name="Slesarev A."/>
            <person name="Wolf Y.I."/>
            <person name="Sorokin A."/>
            <person name="Mirkin B."/>
            <person name="Koonin E.V."/>
            <person name="Pavlov A."/>
            <person name="Pavlova N."/>
            <person name="Karamychev V."/>
            <person name="Polouchine N."/>
            <person name="Shakhova V."/>
            <person name="Grigoriev I."/>
            <person name="Lou Y."/>
            <person name="Rohksar D."/>
            <person name="Lucas S."/>
            <person name="Huang K."/>
            <person name="Goodstein D.M."/>
            <person name="Hawkins T."/>
            <person name="Plengvidhya V."/>
            <person name="Welker D."/>
            <person name="Hughes J."/>
            <person name="Goh Y."/>
            <person name="Benson A."/>
            <person name="Baldwin K."/>
            <person name="Lee J.-H."/>
            <person name="Diaz-Muniz I."/>
            <person name="Dosti B."/>
            <person name="Smeianov V."/>
            <person name="Wechter W."/>
            <person name="Barabote R."/>
            <person name="Lorca G."/>
            <person name="Altermann E."/>
            <person name="Barrangou R."/>
            <person name="Ganesan B."/>
            <person name="Xie Y."/>
            <person name="Rawsthorne H."/>
            <person name="Tamir D."/>
            <person name="Parker C."/>
            <person name="Breidt F."/>
            <person name="Broadbent J.R."/>
            <person name="Hutkins R."/>
            <person name="O'Sullivan D."/>
            <person name="Steele J."/>
            <person name="Unlu G."/>
            <person name="Saier M.H. Jr."/>
            <person name="Klaenhammer T."/>
            <person name="Richardson P."/>
            <person name="Kozyavkin S."/>
            <person name="Weimer B.C."/>
            <person name="Mills D.A."/>
        </authorList>
    </citation>
    <scope>NUCLEOTIDE SEQUENCE [LARGE SCALE GENOMIC DNA]</scope>
    <source>
        <strain>ATCC 25745 / CCUG 21536 / LMG 10740 / 183-1w</strain>
    </source>
</reference>
<evidence type="ECO:0000255" key="1">
    <source>
        <dbReference type="HAMAP-Rule" id="MF_01331"/>
    </source>
</evidence>
<evidence type="ECO:0000305" key="2"/>
<keyword id="KW-0687">Ribonucleoprotein</keyword>
<keyword id="KW-0689">Ribosomal protein</keyword>
<keyword id="KW-0694">RNA-binding</keyword>
<keyword id="KW-0699">rRNA-binding</keyword>
<gene>
    <name evidence="1" type="primary">rplV</name>
    <name type="ordered locus">PEPE_1413</name>
</gene>
<protein>
    <recommendedName>
        <fullName evidence="1">Large ribosomal subunit protein uL22</fullName>
    </recommendedName>
    <alternativeName>
        <fullName evidence="2">50S ribosomal protein L22</fullName>
    </alternativeName>
</protein>
<accession>Q03EC1</accession>
<comment type="function">
    <text evidence="1">This protein binds specifically to 23S rRNA; its binding is stimulated by other ribosomal proteins, e.g. L4, L17, and L20. It is important during the early stages of 50S assembly. It makes multiple contacts with different domains of the 23S rRNA in the assembled 50S subunit and ribosome (By similarity).</text>
</comment>
<comment type="function">
    <text evidence="1">The globular domain of the protein is located near the polypeptide exit tunnel on the outside of the subunit, while an extended beta-hairpin is found that lines the wall of the exit tunnel in the center of the 70S ribosome.</text>
</comment>
<comment type="subunit">
    <text evidence="1">Part of the 50S ribosomal subunit.</text>
</comment>
<comment type="similarity">
    <text evidence="1">Belongs to the universal ribosomal protein uL22 family.</text>
</comment>
<dbReference type="EMBL" id="CP000422">
    <property type="protein sequence ID" value="ABJ68451.1"/>
    <property type="molecule type" value="Genomic_DNA"/>
</dbReference>
<dbReference type="RefSeq" id="WP_002833333.1">
    <property type="nucleotide sequence ID" value="NC_008525.1"/>
</dbReference>
<dbReference type="SMR" id="Q03EC1"/>
<dbReference type="STRING" id="278197.PEPE_1413"/>
<dbReference type="GeneID" id="33061390"/>
<dbReference type="KEGG" id="ppe:PEPE_1413"/>
<dbReference type="eggNOG" id="COG0091">
    <property type="taxonomic scope" value="Bacteria"/>
</dbReference>
<dbReference type="HOGENOM" id="CLU_083987_3_3_9"/>
<dbReference type="OrthoDB" id="9805969at2"/>
<dbReference type="Proteomes" id="UP000000773">
    <property type="component" value="Chromosome"/>
</dbReference>
<dbReference type="GO" id="GO:0022625">
    <property type="term" value="C:cytosolic large ribosomal subunit"/>
    <property type="evidence" value="ECO:0007669"/>
    <property type="project" value="TreeGrafter"/>
</dbReference>
<dbReference type="GO" id="GO:0019843">
    <property type="term" value="F:rRNA binding"/>
    <property type="evidence" value="ECO:0007669"/>
    <property type="project" value="UniProtKB-UniRule"/>
</dbReference>
<dbReference type="GO" id="GO:0003735">
    <property type="term" value="F:structural constituent of ribosome"/>
    <property type="evidence" value="ECO:0007669"/>
    <property type="project" value="InterPro"/>
</dbReference>
<dbReference type="GO" id="GO:0006412">
    <property type="term" value="P:translation"/>
    <property type="evidence" value="ECO:0007669"/>
    <property type="project" value="UniProtKB-UniRule"/>
</dbReference>
<dbReference type="CDD" id="cd00336">
    <property type="entry name" value="Ribosomal_L22"/>
    <property type="match status" value="1"/>
</dbReference>
<dbReference type="FunFam" id="3.90.470.10:FF:000001">
    <property type="entry name" value="50S ribosomal protein L22"/>
    <property type="match status" value="1"/>
</dbReference>
<dbReference type="Gene3D" id="3.90.470.10">
    <property type="entry name" value="Ribosomal protein L22/L17"/>
    <property type="match status" value="1"/>
</dbReference>
<dbReference type="HAMAP" id="MF_01331_B">
    <property type="entry name" value="Ribosomal_uL22_B"/>
    <property type="match status" value="1"/>
</dbReference>
<dbReference type="InterPro" id="IPR001063">
    <property type="entry name" value="Ribosomal_uL22"/>
</dbReference>
<dbReference type="InterPro" id="IPR005727">
    <property type="entry name" value="Ribosomal_uL22_bac/chlpt-type"/>
</dbReference>
<dbReference type="InterPro" id="IPR047867">
    <property type="entry name" value="Ribosomal_uL22_bac/org-type"/>
</dbReference>
<dbReference type="InterPro" id="IPR018260">
    <property type="entry name" value="Ribosomal_uL22_CS"/>
</dbReference>
<dbReference type="InterPro" id="IPR036394">
    <property type="entry name" value="Ribosomal_uL22_sf"/>
</dbReference>
<dbReference type="NCBIfam" id="TIGR01044">
    <property type="entry name" value="rplV_bact"/>
    <property type="match status" value="1"/>
</dbReference>
<dbReference type="PANTHER" id="PTHR13501">
    <property type="entry name" value="CHLOROPLAST 50S RIBOSOMAL PROTEIN L22-RELATED"/>
    <property type="match status" value="1"/>
</dbReference>
<dbReference type="PANTHER" id="PTHR13501:SF8">
    <property type="entry name" value="LARGE RIBOSOMAL SUBUNIT PROTEIN UL22M"/>
    <property type="match status" value="1"/>
</dbReference>
<dbReference type="Pfam" id="PF00237">
    <property type="entry name" value="Ribosomal_L22"/>
    <property type="match status" value="1"/>
</dbReference>
<dbReference type="SUPFAM" id="SSF54843">
    <property type="entry name" value="Ribosomal protein L22"/>
    <property type="match status" value="1"/>
</dbReference>
<dbReference type="PROSITE" id="PS00464">
    <property type="entry name" value="RIBOSOMAL_L22"/>
    <property type="match status" value="1"/>
</dbReference>
<name>RL22_PEDPA</name>
<feature type="chain" id="PRO_1000052621" description="Large ribosomal subunit protein uL22">
    <location>
        <begin position="1"/>
        <end position="118"/>
    </location>
</feature>
<sequence length="118" mass="12872">MAEQVTSAQATAKTVRIAARKIRLVVDLIRGKSVAEAFAILKFTPRSASPVVEKVLKSAVANAENNFDLDREDLVISKVFVNEGPTLKRFRPRAKGSASPINKRTSHITVVVSEKQEG</sequence>
<proteinExistence type="inferred from homology"/>
<organism>
    <name type="scientific">Pediococcus pentosaceus (strain ATCC 25745 / CCUG 21536 / LMG 10740 / 183-1w)</name>
    <dbReference type="NCBI Taxonomy" id="278197"/>
    <lineage>
        <taxon>Bacteria</taxon>
        <taxon>Bacillati</taxon>
        <taxon>Bacillota</taxon>
        <taxon>Bacilli</taxon>
        <taxon>Lactobacillales</taxon>
        <taxon>Lactobacillaceae</taxon>
        <taxon>Pediococcus</taxon>
    </lineage>
</organism>